<keyword id="KW-0002">3D-structure</keyword>
<keyword id="KW-0007">Acetylation</keyword>
<keyword id="KW-0053">Apoptosis</keyword>
<keyword id="KW-0156">Chromatin regulator</keyword>
<keyword id="KW-0175">Coiled coil</keyword>
<keyword id="KW-1017">Isopeptide bond</keyword>
<keyword id="KW-0539">Nucleus</keyword>
<keyword id="KW-0597">Phosphoprotein</keyword>
<keyword id="KW-1185">Reference proteome</keyword>
<keyword id="KW-0678">Repressor</keyword>
<keyword id="KW-0804">Transcription</keyword>
<keyword id="KW-0805">Transcription regulation</keyword>
<keyword id="KW-0832">Ubl conjugation</keyword>
<comment type="function">
    <text evidence="2 5">Regulatory protein which represses transcription and augments histone deacetylase activity of HDAC1. May have a potential role in tumor suppressor pathways through regulation of apoptosis. May function in the assembly and/or enzymatic activity of the mSin3A corepressor complex or in mediating interactions between the complex and other regulatory complexes (By similarity).</text>
</comment>
<comment type="subunit">
    <text evidence="2">Interacts with HCFC1 (By similarity). Homodimer. Component of the SIN3 histone deacetylase (HDAC) corepressor complex. Interacts with SIN3A. Interaction with SIN3B enhances the interaction between SIN3B and HDAC1 to form a complex. Component of a mSin3A corepressor complex that contains SIN3A, SAP130, SUDS3/SAP45, ARID4B/SAP180, HDAC1 and HDAC2. Interacts with USP17L2; the interaction is direct (By similarity). Interacts with FOXK2 (By similarity).</text>
</comment>
<comment type="interaction">
    <interactant intactId="EBI-591431">
        <id>Q8BR65</id>
    </interactant>
    <interactant intactId="EBI-349034">
        <id>Q60520</id>
        <label>Sin3a</label>
    </interactant>
    <organismsDiffer>false</organismsDiffer>
    <experiments>4</experiments>
</comment>
<comment type="interaction">
    <interactant intactId="EBI-591431">
        <id>Q8BR65</id>
    </interactant>
    <interactant intactId="EBI-591450">
        <id>Q62141</id>
        <label>Sin3b</label>
    </interactant>
    <organismsDiffer>false</organismsDiffer>
    <experiments>5</experiments>
</comment>
<comment type="interaction">
    <interactant intactId="EBI-591431">
        <id>Q8BR65</id>
    </interactant>
    <interactant intactId="EBI-591431">
        <id>Q8BR65</id>
        <label>Suds3</label>
    </interactant>
    <organismsDiffer>false</organismsDiffer>
    <experiments>3</experiments>
</comment>
<comment type="subcellular location">
    <subcellularLocation>
        <location evidence="2">Nucleus</location>
    </subcellularLocation>
</comment>
<comment type="tissue specificity">
    <text evidence="5">Expressed in all newborn tissues tested, including brain, kidney and liver.</text>
</comment>
<comment type="domain">
    <text evidence="2">The C-terminus is involved in transcriptional repression by HDAC-independent mechanisms.</text>
</comment>
<comment type="PTM">
    <text evidence="2">Polyubiquitinated. 'Lys-63'-polyubiquitinated SUDS3 positively regulates histone deacetylation. Regulated through deubiquitination by USP17L2/USP17 that cleaves 'Lys-63'-linked ubiquitin chains (By similarity).</text>
</comment>
<comment type="similarity">
    <text evidence="6">Belongs to the SDS3 family.</text>
</comment>
<evidence type="ECO:0000250" key="1"/>
<evidence type="ECO:0000250" key="2">
    <source>
        <dbReference type="UniProtKB" id="Q9H7L9"/>
    </source>
</evidence>
<evidence type="ECO:0000255" key="3"/>
<evidence type="ECO:0000256" key="4">
    <source>
        <dbReference type="SAM" id="MobiDB-lite"/>
    </source>
</evidence>
<evidence type="ECO:0000269" key="5">
    <source>
    </source>
</evidence>
<evidence type="ECO:0000305" key="6"/>
<evidence type="ECO:0000312" key="7">
    <source>
        <dbReference type="EMBL" id="AAH62176.1"/>
    </source>
</evidence>
<evidence type="ECO:0000312" key="8">
    <source>
        <dbReference type="EMBL" id="AAM22676.1"/>
    </source>
</evidence>
<evidence type="ECO:0007744" key="9">
    <source>
    </source>
</evidence>
<evidence type="ECO:0007744" key="10">
    <source>
    </source>
</evidence>
<evidence type="ECO:0007744" key="11">
    <source>
    </source>
</evidence>
<evidence type="ECO:0007829" key="12">
    <source>
        <dbReference type="PDB" id="2N2H"/>
    </source>
</evidence>
<evidence type="ECO:0007829" key="13">
    <source>
        <dbReference type="PDB" id="4ZQA"/>
    </source>
</evidence>
<evidence type="ECO:0007829" key="14">
    <source>
        <dbReference type="PDB" id="7SXI"/>
    </source>
</evidence>
<accession>Q8BR65</accession>
<accession>Q3UC92</accession>
<accession>Q6P6K1</accession>
<accession>Q7TNT0</accession>
<accession>Q8BRR7</accession>
<accession>Q8K5B4</accession>
<gene>
    <name type="primary">Suds3</name>
    <name type="synonym">Sds3</name>
</gene>
<organism>
    <name type="scientific">Mus musculus</name>
    <name type="common">Mouse</name>
    <dbReference type="NCBI Taxonomy" id="10090"/>
    <lineage>
        <taxon>Eukaryota</taxon>
        <taxon>Metazoa</taxon>
        <taxon>Chordata</taxon>
        <taxon>Craniata</taxon>
        <taxon>Vertebrata</taxon>
        <taxon>Euteleostomi</taxon>
        <taxon>Mammalia</taxon>
        <taxon>Eutheria</taxon>
        <taxon>Euarchontoglires</taxon>
        <taxon>Glires</taxon>
        <taxon>Rodentia</taxon>
        <taxon>Myomorpha</taxon>
        <taxon>Muroidea</taxon>
        <taxon>Muridae</taxon>
        <taxon>Murinae</taxon>
        <taxon>Mus</taxon>
        <taxon>Mus</taxon>
    </lineage>
</organism>
<dbReference type="EMBL" id="AF469109">
    <property type="protein sequence ID" value="AAM22676.1"/>
    <property type="molecule type" value="mRNA"/>
</dbReference>
<dbReference type="EMBL" id="AK043652">
    <property type="protein sequence ID" value="BAC31608.1"/>
    <property type="molecule type" value="mRNA"/>
</dbReference>
<dbReference type="EMBL" id="AK045475">
    <property type="protein sequence ID" value="BAC32387.1"/>
    <property type="molecule type" value="mRNA"/>
</dbReference>
<dbReference type="EMBL" id="AK138947">
    <property type="protein sequence ID" value="BAE23831.1"/>
    <property type="molecule type" value="mRNA"/>
</dbReference>
<dbReference type="EMBL" id="AK150633">
    <property type="protein sequence ID" value="BAE29722.1"/>
    <property type="molecule type" value="mRNA"/>
</dbReference>
<dbReference type="EMBL" id="BC055764">
    <property type="protein sequence ID" value="AAH55764.2"/>
    <property type="molecule type" value="mRNA"/>
</dbReference>
<dbReference type="EMBL" id="BC062176">
    <property type="protein sequence ID" value="AAH62176.1"/>
    <property type="molecule type" value="mRNA"/>
</dbReference>
<dbReference type="CCDS" id="CCDS39232.1"/>
<dbReference type="RefSeq" id="NP_001116138.1">
    <property type="nucleotide sequence ID" value="NM_001122666.2"/>
</dbReference>
<dbReference type="RefSeq" id="NP_848737.3">
    <property type="nucleotide sequence ID" value="NM_178622.5"/>
</dbReference>
<dbReference type="PDB" id="2N2H">
    <property type="method" value="NMR"/>
    <property type="chains" value="A=205-228"/>
</dbReference>
<dbReference type="PDB" id="4ZQA">
    <property type="method" value="X-ray"/>
    <property type="resolution" value="1.65 A"/>
    <property type="chains" value="A=90-172"/>
</dbReference>
<dbReference type="PDB" id="7SXI">
    <property type="method" value="NMR"/>
    <property type="chains" value="A=250-326"/>
</dbReference>
<dbReference type="PDBsum" id="2N2H"/>
<dbReference type="PDBsum" id="4ZQA"/>
<dbReference type="PDBsum" id="7SXI"/>
<dbReference type="SMR" id="Q8BR65"/>
<dbReference type="BioGRID" id="215053">
    <property type="interactions" value="14"/>
</dbReference>
<dbReference type="ComplexPortal" id="CPX-3441">
    <property type="entry name" value="SIN3A histone deacetylase complex, ES cell-specific variant"/>
</dbReference>
<dbReference type="ComplexPortal" id="CPX-3443">
    <property type="entry name" value="SIN3A histone deacetylase complex"/>
</dbReference>
<dbReference type="ComplexPortal" id="CPX-3444">
    <property type="entry name" value="SIN3B histone deacetylase complex"/>
</dbReference>
<dbReference type="CORUM" id="Q8BR65"/>
<dbReference type="FunCoup" id="Q8BR65">
    <property type="interactions" value="4527"/>
</dbReference>
<dbReference type="IntAct" id="Q8BR65">
    <property type="interactions" value="2"/>
</dbReference>
<dbReference type="STRING" id="10090.ENSMUSP00000130535"/>
<dbReference type="iPTMnet" id="Q8BR65"/>
<dbReference type="PhosphoSitePlus" id="Q8BR65"/>
<dbReference type="jPOST" id="Q8BR65"/>
<dbReference type="PaxDb" id="10090-ENSMUSP00000130535"/>
<dbReference type="PeptideAtlas" id="Q8BR65"/>
<dbReference type="ProteomicsDB" id="255507"/>
<dbReference type="Pumba" id="Q8BR65"/>
<dbReference type="Antibodypedia" id="31389">
    <property type="antibodies" value="107 antibodies from 20 providers"/>
</dbReference>
<dbReference type="DNASU" id="71954"/>
<dbReference type="Ensembl" id="ENSMUST00000086471.12">
    <property type="protein sequence ID" value="ENSMUSP00000083662.6"/>
    <property type="gene ID" value="ENSMUSG00000066900.12"/>
</dbReference>
<dbReference type="GeneID" id="71954"/>
<dbReference type="KEGG" id="mmu:71954"/>
<dbReference type="UCSC" id="uc008zff.3">
    <property type="organism name" value="mouse"/>
</dbReference>
<dbReference type="AGR" id="MGI:1919204"/>
<dbReference type="CTD" id="64426"/>
<dbReference type="MGI" id="MGI:1919204">
    <property type="gene designation" value="Suds3"/>
</dbReference>
<dbReference type="VEuPathDB" id="HostDB:ENSMUSG00000066900"/>
<dbReference type="eggNOG" id="KOG4466">
    <property type="taxonomic scope" value="Eukaryota"/>
</dbReference>
<dbReference type="GeneTree" id="ENSGT00910000144281"/>
<dbReference type="HOGENOM" id="CLU_050862_0_1_1"/>
<dbReference type="InParanoid" id="Q8BR65"/>
<dbReference type="OMA" id="YERRWYH"/>
<dbReference type="OrthoDB" id="70376at2759"/>
<dbReference type="PhylomeDB" id="Q8BR65"/>
<dbReference type="TreeFam" id="TF323740"/>
<dbReference type="Reactome" id="R-MMU-3214815">
    <property type="pathway name" value="HDACs deacetylate histones"/>
</dbReference>
<dbReference type="Reactome" id="R-MMU-5689880">
    <property type="pathway name" value="Ub-specific processing proteases"/>
</dbReference>
<dbReference type="BioGRID-ORCS" id="71954">
    <property type="hits" value="27 hits in 79 CRISPR screens"/>
</dbReference>
<dbReference type="ChiTaRS" id="Suds3">
    <property type="organism name" value="mouse"/>
</dbReference>
<dbReference type="EvolutionaryTrace" id="Q8BR65"/>
<dbReference type="PRO" id="PR:Q8BR65"/>
<dbReference type="Proteomes" id="UP000000589">
    <property type="component" value="Chromosome 5"/>
</dbReference>
<dbReference type="RNAct" id="Q8BR65">
    <property type="molecule type" value="protein"/>
</dbReference>
<dbReference type="Bgee" id="ENSMUSG00000066900">
    <property type="expression patterns" value="Expressed in spermatid and 268 other cell types or tissues"/>
</dbReference>
<dbReference type="ExpressionAtlas" id="Q8BR65">
    <property type="expression patterns" value="baseline and differential"/>
</dbReference>
<dbReference type="GO" id="GO:0005634">
    <property type="term" value="C:nucleus"/>
    <property type="evidence" value="ECO:0000250"/>
    <property type="project" value="UniProtKB"/>
</dbReference>
<dbReference type="GO" id="GO:0070822">
    <property type="term" value="C:Sin3-type complex"/>
    <property type="evidence" value="ECO:0000314"/>
    <property type="project" value="UniProtKB"/>
</dbReference>
<dbReference type="GO" id="GO:0042826">
    <property type="term" value="F:histone deacetylase binding"/>
    <property type="evidence" value="ECO:0000314"/>
    <property type="project" value="UniProtKB"/>
</dbReference>
<dbReference type="GO" id="GO:0042802">
    <property type="term" value="F:identical protein binding"/>
    <property type="evidence" value="ECO:0000353"/>
    <property type="project" value="IntAct"/>
</dbReference>
<dbReference type="GO" id="GO:0006915">
    <property type="term" value="P:apoptotic process"/>
    <property type="evidence" value="ECO:0007669"/>
    <property type="project" value="UniProtKB-KW"/>
</dbReference>
<dbReference type="GO" id="GO:0001835">
    <property type="term" value="P:blastocyst hatching"/>
    <property type="evidence" value="ECO:0000315"/>
    <property type="project" value="MGI"/>
</dbReference>
<dbReference type="GO" id="GO:0006338">
    <property type="term" value="P:chromatin remodeling"/>
    <property type="evidence" value="ECO:0000250"/>
    <property type="project" value="UniProtKB"/>
</dbReference>
<dbReference type="GO" id="GO:0030336">
    <property type="term" value="P:negative regulation of cell migration"/>
    <property type="evidence" value="ECO:0000303"/>
    <property type="project" value="ComplexPortal"/>
</dbReference>
<dbReference type="GO" id="GO:0045892">
    <property type="term" value="P:negative regulation of DNA-templated transcription"/>
    <property type="evidence" value="ECO:0000314"/>
    <property type="project" value="UniProtKB"/>
</dbReference>
<dbReference type="GO" id="GO:1902455">
    <property type="term" value="P:negative regulation of stem cell population maintenance"/>
    <property type="evidence" value="ECO:0000303"/>
    <property type="project" value="ComplexPortal"/>
</dbReference>
<dbReference type="GO" id="GO:0000122">
    <property type="term" value="P:negative regulation of transcription by RNA polymerase II"/>
    <property type="evidence" value="ECO:0000303"/>
    <property type="project" value="ComplexPortal"/>
</dbReference>
<dbReference type="GO" id="GO:0030512">
    <property type="term" value="P:negative regulation of transforming growth factor beta receptor signaling pathway"/>
    <property type="evidence" value="ECO:0000303"/>
    <property type="project" value="ComplexPortal"/>
</dbReference>
<dbReference type="GO" id="GO:1902459">
    <property type="term" value="P:positive regulation of stem cell population maintenance"/>
    <property type="evidence" value="ECO:0000303"/>
    <property type="project" value="ComplexPortal"/>
</dbReference>
<dbReference type="InterPro" id="IPR013907">
    <property type="entry name" value="Sds3"/>
</dbReference>
<dbReference type="PANTHER" id="PTHR21964">
    <property type="entry name" value="BREAST CANCER METASTASIS-SUPPRESSOR 1"/>
    <property type="match status" value="1"/>
</dbReference>
<dbReference type="Pfam" id="PF08598">
    <property type="entry name" value="Sds3"/>
    <property type="match status" value="1"/>
</dbReference>
<dbReference type="SMART" id="SM01401">
    <property type="entry name" value="Sds3"/>
    <property type="match status" value="1"/>
</dbReference>
<proteinExistence type="evidence at protein level"/>
<name>SDS3_MOUSE</name>
<sequence>MSAAGLLAPAPAPAAAPAAPEYYPEDEEELESAEDDERSCRGRESDEDTEDASETDLAKHDEEDYVEMKEQMYQDKLASLKRQLQQLQEGTLQEYQKRMKKLDQQYRERIRNAELFLQLETEQVERNYIKEKKAAVKEFEDKKVELKENLIAELEEKKKMIENEKLTMELTGDSMEVKPIMTRKLRRRPNDPVPIPDKRRKPAPAQLNYLLTDEQIMEDLRTLNKLKSPKRPASPSSPEHLPATPAESPAQRFEARIEDGKLYYDKRWYHKSQAIYLESKDNQKLSCVISSVGANEIWVRKTSDSTKMRIYVGQLQRGLFVIRRRSAA</sequence>
<reference evidence="6 8" key="1">
    <citation type="journal article" date="2002" name="Mol. Cell. Biol.">
        <title>Identification of mammalian Sds3 as an integral component of the Sin3/histone deacetylase corepressor complex.</title>
        <authorList>
            <person name="Alland L."/>
            <person name="David G."/>
            <person name="Shen-Li H."/>
            <person name="Potes J."/>
            <person name="Muhle R."/>
            <person name="Lee H.-C."/>
            <person name="Hou H. Jr."/>
            <person name="Chen K."/>
            <person name="DePinho R.A."/>
        </authorList>
    </citation>
    <scope>NUCLEOTIDE SEQUENCE [MRNA]</scope>
    <scope>FUNCTION</scope>
    <scope>SUBUNIT</scope>
    <scope>INTERACTION WITH SIN3A AND SIN3B</scope>
    <scope>TISSUE SPECIFICITY</scope>
    <source>
        <strain evidence="8">C57BL/6J</strain>
    </source>
</reference>
<reference key="2">
    <citation type="journal article" date="2005" name="Science">
        <title>The transcriptional landscape of the mammalian genome.</title>
        <authorList>
            <person name="Carninci P."/>
            <person name="Kasukawa T."/>
            <person name="Katayama S."/>
            <person name="Gough J."/>
            <person name="Frith M.C."/>
            <person name="Maeda N."/>
            <person name="Oyama R."/>
            <person name="Ravasi T."/>
            <person name="Lenhard B."/>
            <person name="Wells C."/>
            <person name="Kodzius R."/>
            <person name="Shimokawa K."/>
            <person name="Bajic V.B."/>
            <person name="Brenner S.E."/>
            <person name="Batalov S."/>
            <person name="Forrest A.R."/>
            <person name="Zavolan M."/>
            <person name="Davis M.J."/>
            <person name="Wilming L.G."/>
            <person name="Aidinis V."/>
            <person name="Allen J.E."/>
            <person name="Ambesi-Impiombato A."/>
            <person name="Apweiler R."/>
            <person name="Aturaliya R.N."/>
            <person name="Bailey T.L."/>
            <person name="Bansal M."/>
            <person name="Baxter L."/>
            <person name="Beisel K.W."/>
            <person name="Bersano T."/>
            <person name="Bono H."/>
            <person name="Chalk A.M."/>
            <person name="Chiu K.P."/>
            <person name="Choudhary V."/>
            <person name="Christoffels A."/>
            <person name="Clutterbuck D.R."/>
            <person name="Crowe M.L."/>
            <person name="Dalla E."/>
            <person name="Dalrymple B.P."/>
            <person name="de Bono B."/>
            <person name="Della Gatta G."/>
            <person name="di Bernardo D."/>
            <person name="Down T."/>
            <person name="Engstrom P."/>
            <person name="Fagiolini M."/>
            <person name="Faulkner G."/>
            <person name="Fletcher C.F."/>
            <person name="Fukushima T."/>
            <person name="Furuno M."/>
            <person name="Futaki S."/>
            <person name="Gariboldi M."/>
            <person name="Georgii-Hemming P."/>
            <person name="Gingeras T.R."/>
            <person name="Gojobori T."/>
            <person name="Green R.E."/>
            <person name="Gustincich S."/>
            <person name="Harbers M."/>
            <person name="Hayashi Y."/>
            <person name="Hensch T.K."/>
            <person name="Hirokawa N."/>
            <person name="Hill D."/>
            <person name="Huminiecki L."/>
            <person name="Iacono M."/>
            <person name="Ikeo K."/>
            <person name="Iwama A."/>
            <person name="Ishikawa T."/>
            <person name="Jakt M."/>
            <person name="Kanapin A."/>
            <person name="Katoh M."/>
            <person name="Kawasawa Y."/>
            <person name="Kelso J."/>
            <person name="Kitamura H."/>
            <person name="Kitano H."/>
            <person name="Kollias G."/>
            <person name="Krishnan S.P."/>
            <person name="Kruger A."/>
            <person name="Kummerfeld S.K."/>
            <person name="Kurochkin I.V."/>
            <person name="Lareau L.F."/>
            <person name="Lazarevic D."/>
            <person name="Lipovich L."/>
            <person name="Liu J."/>
            <person name="Liuni S."/>
            <person name="McWilliam S."/>
            <person name="Madan Babu M."/>
            <person name="Madera M."/>
            <person name="Marchionni L."/>
            <person name="Matsuda H."/>
            <person name="Matsuzawa S."/>
            <person name="Miki H."/>
            <person name="Mignone F."/>
            <person name="Miyake S."/>
            <person name="Morris K."/>
            <person name="Mottagui-Tabar S."/>
            <person name="Mulder N."/>
            <person name="Nakano N."/>
            <person name="Nakauchi H."/>
            <person name="Ng P."/>
            <person name="Nilsson R."/>
            <person name="Nishiguchi S."/>
            <person name="Nishikawa S."/>
            <person name="Nori F."/>
            <person name="Ohara O."/>
            <person name="Okazaki Y."/>
            <person name="Orlando V."/>
            <person name="Pang K.C."/>
            <person name="Pavan W.J."/>
            <person name="Pavesi G."/>
            <person name="Pesole G."/>
            <person name="Petrovsky N."/>
            <person name="Piazza S."/>
            <person name="Reed J."/>
            <person name="Reid J.F."/>
            <person name="Ring B.Z."/>
            <person name="Ringwald M."/>
            <person name="Rost B."/>
            <person name="Ruan Y."/>
            <person name="Salzberg S.L."/>
            <person name="Sandelin A."/>
            <person name="Schneider C."/>
            <person name="Schoenbach C."/>
            <person name="Sekiguchi K."/>
            <person name="Semple C.A."/>
            <person name="Seno S."/>
            <person name="Sessa L."/>
            <person name="Sheng Y."/>
            <person name="Shibata Y."/>
            <person name="Shimada H."/>
            <person name="Shimada K."/>
            <person name="Silva D."/>
            <person name="Sinclair B."/>
            <person name="Sperling S."/>
            <person name="Stupka E."/>
            <person name="Sugiura K."/>
            <person name="Sultana R."/>
            <person name="Takenaka Y."/>
            <person name="Taki K."/>
            <person name="Tammoja K."/>
            <person name="Tan S.L."/>
            <person name="Tang S."/>
            <person name="Taylor M.S."/>
            <person name="Tegner J."/>
            <person name="Teichmann S.A."/>
            <person name="Ueda H.R."/>
            <person name="van Nimwegen E."/>
            <person name="Verardo R."/>
            <person name="Wei C.L."/>
            <person name="Yagi K."/>
            <person name="Yamanishi H."/>
            <person name="Zabarovsky E."/>
            <person name="Zhu S."/>
            <person name="Zimmer A."/>
            <person name="Hide W."/>
            <person name="Bult C."/>
            <person name="Grimmond S.M."/>
            <person name="Teasdale R.D."/>
            <person name="Liu E.T."/>
            <person name="Brusic V."/>
            <person name="Quackenbush J."/>
            <person name="Wahlestedt C."/>
            <person name="Mattick J.S."/>
            <person name="Hume D.A."/>
            <person name="Kai C."/>
            <person name="Sasaki D."/>
            <person name="Tomaru Y."/>
            <person name="Fukuda S."/>
            <person name="Kanamori-Katayama M."/>
            <person name="Suzuki M."/>
            <person name="Aoki J."/>
            <person name="Arakawa T."/>
            <person name="Iida J."/>
            <person name="Imamura K."/>
            <person name="Itoh M."/>
            <person name="Kato T."/>
            <person name="Kawaji H."/>
            <person name="Kawagashira N."/>
            <person name="Kawashima T."/>
            <person name="Kojima M."/>
            <person name="Kondo S."/>
            <person name="Konno H."/>
            <person name="Nakano K."/>
            <person name="Ninomiya N."/>
            <person name="Nishio T."/>
            <person name="Okada M."/>
            <person name="Plessy C."/>
            <person name="Shibata K."/>
            <person name="Shiraki T."/>
            <person name="Suzuki S."/>
            <person name="Tagami M."/>
            <person name="Waki K."/>
            <person name="Watahiki A."/>
            <person name="Okamura-Oho Y."/>
            <person name="Suzuki H."/>
            <person name="Kawai J."/>
            <person name="Hayashizaki Y."/>
        </authorList>
    </citation>
    <scope>NUCLEOTIDE SEQUENCE [LARGE SCALE MRNA]</scope>
    <source>
        <strain>C57BL/6J</strain>
        <tissue>Aorta</tissue>
        <tissue>Bone marrow macrophage</tissue>
        <tissue>Brain cortex</tissue>
        <tissue>Corpora quadrigemina</tissue>
        <tissue>Vein</tissue>
    </source>
</reference>
<reference evidence="7" key="3">
    <citation type="journal article" date="2004" name="Genome Res.">
        <title>The status, quality, and expansion of the NIH full-length cDNA project: the Mammalian Gene Collection (MGC).</title>
        <authorList>
            <consortium name="The MGC Project Team"/>
        </authorList>
    </citation>
    <scope>NUCLEOTIDE SEQUENCE [LARGE SCALE MRNA]</scope>
    <source>
        <strain>C57BL/6J</strain>
        <tissue>Brain</tissue>
        <tissue evidence="7">Limb</tissue>
    </source>
</reference>
<reference key="4">
    <citation type="journal article" date="2007" name="Proc. Natl. Acad. Sci. U.S.A.">
        <title>Large-scale phosphorylation analysis of mouse liver.</title>
        <authorList>
            <person name="Villen J."/>
            <person name="Beausoleil S.A."/>
            <person name="Gerber S.A."/>
            <person name="Gygi S.P."/>
        </authorList>
    </citation>
    <scope>PHOSPHORYLATION [LARGE SCALE ANALYSIS] AT SER-45 AND THR-49</scope>
    <scope>IDENTIFICATION BY MASS SPECTROMETRY [LARGE SCALE ANALYSIS]</scope>
    <source>
        <tissue>Liver</tissue>
    </source>
</reference>
<reference key="5">
    <citation type="journal article" date="2009" name="Immunity">
        <title>The phagosomal proteome in interferon-gamma-activated macrophages.</title>
        <authorList>
            <person name="Trost M."/>
            <person name="English L."/>
            <person name="Lemieux S."/>
            <person name="Courcelles M."/>
            <person name="Desjardins M."/>
            <person name="Thibault P."/>
        </authorList>
    </citation>
    <scope>PHOSPHORYLATION [LARGE SCALE ANALYSIS] AT SER-234 AND SER-237</scope>
    <scope>IDENTIFICATION BY MASS SPECTROMETRY [LARGE SCALE ANALYSIS]</scope>
</reference>
<reference key="6">
    <citation type="journal article" date="2010" name="Cell">
        <title>A tissue-specific atlas of mouse protein phosphorylation and expression.</title>
        <authorList>
            <person name="Huttlin E.L."/>
            <person name="Jedrychowski M.P."/>
            <person name="Elias J.E."/>
            <person name="Goswami T."/>
            <person name="Rad R."/>
            <person name="Beausoleil S.A."/>
            <person name="Villen J."/>
            <person name="Haas W."/>
            <person name="Sowa M.E."/>
            <person name="Gygi S.P."/>
        </authorList>
    </citation>
    <scope>PHOSPHORYLATION [LARGE SCALE ANALYSIS] AT SER-45; THR-49 AND SER-234</scope>
    <scope>IDENTIFICATION BY MASS SPECTROMETRY [LARGE SCALE ANALYSIS]</scope>
    <source>
        <tissue>Brain</tissue>
        <tissue>Brown adipose tissue</tissue>
        <tissue>Heart</tissue>
        <tissue>Kidney</tissue>
        <tissue>Liver</tissue>
        <tissue>Lung</tissue>
        <tissue>Spleen</tissue>
        <tissue>Testis</tissue>
    </source>
</reference>
<protein>
    <recommendedName>
        <fullName>Sin3 histone deacetylase corepressor complex component SDS3</fullName>
    </recommendedName>
    <alternativeName>
        <fullName>Suppressor of defective silencing 3 protein homolog</fullName>
    </alternativeName>
</protein>
<feature type="initiator methionine" description="Removed" evidence="2">
    <location>
        <position position="1"/>
    </location>
</feature>
<feature type="chain" id="PRO_0000097653" description="Sin3 histone deacetylase corepressor complex component SDS3">
    <location>
        <begin position="2"/>
        <end position="328"/>
    </location>
</feature>
<feature type="region of interest" description="Disordered" evidence="4">
    <location>
        <begin position="1"/>
        <end position="69"/>
    </location>
</feature>
<feature type="region of interest" description="Mediates interaction with USP17L2" evidence="1">
    <location>
        <begin position="2"/>
        <end position="170"/>
    </location>
</feature>
<feature type="region of interest" description="Sin3 interaction domain (SID)">
    <location>
        <begin position="188"/>
        <end position="226"/>
    </location>
</feature>
<feature type="region of interest" description="Disordered" evidence="4">
    <location>
        <begin position="226"/>
        <end position="252"/>
    </location>
</feature>
<feature type="coiled-coil region" evidence="3">
    <location>
        <begin position="66"/>
        <end position="171"/>
    </location>
</feature>
<feature type="compositionally biased region" description="Low complexity" evidence="4">
    <location>
        <begin position="1"/>
        <end position="22"/>
    </location>
</feature>
<feature type="compositionally biased region" description="Acidic residues" evidence="4">
    <location>
        <begin position="23"/>
        <end position="37"/>
    </location>
</feature>
<feature type="compositionally biased region" description="Acidic residues" evidence="4">
    <location>
        <begin position="45"/>
        <end position="54"/>
    </location>
</feature>
<feature type="compositionally biased region" description="Basic and acidic residues" evidence="4">
    <location>
        <begin position="56"/>
        <end position="69"/>
    </location>
</feature>
<feature type="modified residue" description="N-acetylserine" evidence="2">
    <location>
        <position position="2"/>
    </location>
</feature>
<feature type="modified residue" description="Phosphoserine" evidence="2">
    <location>
        <position position="32"/>
    </location>
</feature>
<feature type="modified residue" description="Phosphoserine" evidence="9 11">
    <location>
        <position position="45"/>
    </location>
</feature>
<feature type="modified residue" description="Phosphothreonine" evidence="9 11">
    <location>
        <position position="49"/>
    </location>
</feature>
<feature type="modified residue" description="Phosphoserine" evidence="2">
    <location>
        <position position="53"/>
    </location>
</feature>
<feature type="modified residue" description="Phosphoserine" evidence="2">
    <location>
        <position position="228"/>
    </location>
</feature>
<feature type="modified residue" description="Phosphoserine" evidence="10 11">
    <location>
        <position position="234"/>
    </location>
</feature>
<feature type="modified residue" description="Phosphoserine" evidence="10">
    <location>
        <position position="237"/>
    </location>
</feature>
<feature type="modified residue" description="Phosphothreonine" evidence="2">
    <location>
        <position position="244"/>
    </location>
</feature>
<feature type="cross-link" description="Glycyl lysine isopeptide (Lys-Gly) (interchain with G-Cter in SUMO2)" evidence="2">
    <location>
        <position position="69"/>
    </location>
</feature>
<feature type="cross-link" description="Glycyl lysine isopeptide (Lys-Gly) (interchain with G-Cter in SUMO2)" evidence="2">
    <location>
        <position position="178"/>
    </location>
</feature>
<feature type="cross-link" description="Glycyl lysine isopeptide (Lys-Gly) (interchain with G-Cter in SUMO2)" evidence="2">
    <location>
        <position position="201"/>
    </location>
</feature>
<feature type="sequence conflict" description="In Ref. 2; BAC31608." evidence="6" ref="2">
    <original>K</original>
    <variation>N</variation>
    <location>
        <position position="142"/>
    </location>
</feature>
<feature type="sequence conflict" description="In Ref. 1; AAM22676." evidence="6" ref="1">
    <original>R</original>
    <variation>W</variation>
    <location>
        <position position="186"/>
    </location>
</feature>
<feature type="sequence conflict" description="In Ref. 3; AAH62176." evidence="6" ref="3">
    <original>SAA</original>
    <variation>KFLTYRD</variation>
    <location>
        <begin position="326"/>
        <end position="328"/>
    </location>
</feature>
<feature type="helix" evidence="13">
    <location>
        <begin position="90"/>
        <end position="170"/>
    </location>
</feature>
<feature type="helix" evidence="12">
    <location>
        <begin position="213"/>
        <end position="223"/>
    </location>
</feature>
<feature type="strand" evidence="14">
    <location>
        <begin position="255"/>
        <end position="258"/>
    </location>
</feature>
<feature type="strand" evidence="14">
    <location>
        <begin position="261"/>
        <end position="264"/>
    </location>
</feature>
<feature type="strand" evidence="14">
    <location>
        <begin position="267"/>
        <end position="269"/>
    </location>
</feature>
<feature type="strand" evidence="14">
    <location>
        <begin position="274"/>
        <end position="278"/>
    </location>
</feature>
<feature type="strand" evidence="14">
    <location>
        <begin position="280"/>
        <end position="282"/>
    </location>
</feature>
<feature type="strand" evidence="14">
    <location>
        <begin position="285"/>
        <end position="292"/>
    </location>
</feature>
<feature type="strand" evidence="14">
    <location>
        <begin position="294"/>
        <end position="301"/>
    </location>
</feature>
<feature type="turn" evidence="14">
    <location>
        <begin position="302"/>
        <end position="304"/>
    </location>
</feature>
<feature type="strand" evidence="14">
    <location>
        <begin position="307"/>
        <end position="311"/>
    </location>
</feature>
<feature type="helix" evidence="14">
    <location>
        <begin position="312"/>
        <end position="317"/>
    </location>
</feature>
<feature type="strand" evidence="14">
    <location>
        <begin position="320"/>
        <end position="325"/>
    </location>
</feature>